<feature type="chain" id="PRO_0000236747" description="Tyrosine--tRNA ligase">
    <location>
        <begin position="1"/>
        <end position="415"/>
    </location>
</feature>
<feature type="domain" description="S4 RNA-binding" evidence="1">
    <location>
        <begin position="351"/>
        <end position="415"/>
    </location>
</feature>
<feature type="short sequence motif" description="'HIGH' region">
    <location>
        <begin position="54"/>
        <end position="63"/>
    </location>
</feature>
<feature type="short sequence motif" description="'KMSKS' region">
    <location>
        <begin position="248"/>
        <end position="252"/>
    </location>
</feature>
<feature type="binding site" evidence="1">
    <location>
        <position position="251"/>
    </location>
    <ligand>
        <name>ATP</name>
        <dbReference type="ChEBI" id="CHEBI:30616"/>
    </ligand>
</feature>
<accession>Q46JD7</accession>
<organism>
    <name type="scientific">Prochlorococcus marinus (strain NATL2A)</name>
    <dbReference type="NCBI Taxonomy" id="59920"/>
    <lineage>
        <taxon>Bacteria</taxon>
        <taxon>Bacillati</taxon>
        <taxon>Cyanobacteriota</taxon>
        <taxon>Cyanophyceae</taxon>
        <taxon>Synechococcales</taxon>
        <taxon>Prochlorococcaceae</taxon>
        <taxon>Prochlorococcus</taxon>
    </lineage>
</organism>
<protein>
    <recommendedName>
        <fullName evidence="1">Tyrosine--tRNA ligase</fullName>
        <ecNumber evidence="1">6.1.1.1</ecNumber>
    </recommendedName>
    <alternativeName>
        <fullName evidence="1">Tyrosyl-tRNA synthetase</fullName>
        <shortName evidence="1">TyrRS</shortName>
    </alternativeName>
</protein>
<proteinExistence type="inferred from homology"/>
<comment type="function">
    <text evidence="1">Catalyzes the attachment of tyrosine to tRNA(Tyr) in a two-step reaction: tyrosine is first activated by ATP to form Tyr-AMP and then transferred to the acceptor end of tRNA(Tyr).</text>
</comment>
<comment type="catalytic activity">
    <reaction evidence="1">
        <text>tRNA(Tyr) + L-tyrosine + ATP = L-tyrosyl-tRNA(Tyr) + AMP + diphosphate + H(+)</text>
        <dbReference type="Rhea" id="RHEA:10220"/>
        <dbReference type="Rhea" id="RHEA-COMP:9706"/>
        <dbReference type="Rhea" id="RHEA-COMP:9707"/>
        <dbReference type="ChEBI" id="CHEBI:15378"/>
        <dbReference type="ChEBI" id="CHEBI:30616"/>
        <dbReference type="ChEBI" id="CHEBI:33019"/>
        <dbReference type="ChEBI" id="CHEBI:58315"/>
        <dbReference type="ChEBI" id="CHEBI:78442"/>
        <dbReference type="ChEBI" id="CHEBI:78536"/>
        <dbReference type="ChEBI" id="CHEBI:456215"/>
        <dbReference type="EC" id="6.1.1.1"/>
    </reaction>
</comment>
<comment type="subunit">
    <text evidence="1">Homodimer.</text>
</comment>
<comment type="subcellular location">
    <subcellularLocation>
        <location evidence="1">Cytoplasm</location>
    </subcellularLocation>
</comment>
<comment type="similarity">
    <text evidence="1">Belongs to the class-I aminoacyl-tRNA synthetase family. TyrS type 2 subfamily.</text>
</comment>
<reference key="1">
    <citation type="journal article" date="2007" name="PLoS Genet.">
        <title>Patterns and implications of gene gain and loss in the evolution of Prochlorococcus.</title>
        <authorList>
            <person name="Kettler G.C."/>
            <person name="Martiny A.C."/>
            <person name="Huang K."/>
            <person name="Zucker J."/>
            <person name="Coleman M.L."/>
            <person name="Rodrigue S."/>
            <person name="Chen F."/>
            <person name="Lapidus A."/>
            <person name="Ferriera S."/>
            <person name="Johnson J."/>
            <person name="Steglich C."/>
            <person name="Church G.M."/>
            <person name="Richardson P."/>
            <person name="Chisholm S.W."/>
        </authorList>
    </citation>
    <scope>NUCLEOTIDE SEQUENCE [LARGE SCALE GENOMIC DNA]</scope>
    <source>
        <strain>NATL2A</strain>
    </source>
</reference>
<evidence type="ECO:0000255" key="1">
    <source>
        <dbReference type="HAMAP-Rule" id="MF_02007"/>
    </source>
</evidence>
<keyword id="KW-0030">Aminoacyl-tRNA synthetase</keyword>
<keyword id="KW-0067">ATP-binding</keyword>
<keyword id="KW-0963">Cytoplasm</keyword>
<keyword id="KW-0436">Ligase</keyword>
<keyword id="KW-0547">Nucleotide-binding</keyword>
<keyword id="KW-0648">Protein biosynthesis</keyword>
<keyword id="KW-1185">Reference proteome</keyword>
<keyword id="KW-0694">RNA-binding</keyword>
<dbReference type="EC" id="6.1.1.1" evidence="1"/>
<dbReference type="EMBL" id="CP000095">
    <property type="protein sequence ID" value="AAZ58391.1"/>
    <property type="molecule type" value="Genomic_DNA"/>
</dbReference>
<dbReference type="RefSeq" id="WP_011295248.1">
    <property type="nucleotide sequence ID" value="NC_007335.2"/>
</dbReference>
<dbReference type="SMR" id="Q46JD7"/>
<dbReference type="STRING" id="59920.PMN2A_0900"/>
<dbReference type="KEGG" id="pmn:PMN2A_0900"/>
<dbReference type="HOGENOM" id="CLU_024003_5_0_3"/>
<dbReference type="OrthoDB" id="9804243at2"/>
<dbReference type="PhylomeDB" id="Q46JD7"/>
<dbReference type="Proteomes" id="UP000002535">
    <property type="component" value="Chromosome"/>
</dbReference>
<dbReference type="GO" id="GO:0005829">
    <property type="term" value="C:cytosol"/>
    <property type="evidence" value="ECO:0007669"/>
    <property type="project" value="TreeGrafter"/>
</dbReference>
<dbReference type="GO" id="GO:0005524">
    <property type="term" value="F:ATP binding"/>
    <property type="evidence" value="ECO:0007669"/>
    <property type="project" value="UniProtKB-UniRule"/>
</dbReference>
<dbReference type="GO" id="GO:0003723">
    <property type="term" value="F:RNA binding"/>
    <property type="evidence" value="ECO:0007669"/>
    <property type="project" value="UniProtKB-KW"/>
</dbReference>
<dbReference type="GO" id="GO:0004831">
    <property type="term" value="F:tyrosine-tRNA ligase activity"/>
    <property type="evidence" value="ECO:0007669"/>
    <property type="project" value="UniProtKB-UniRule"/>
</dbReference>
<dbReference type="GO" id="GO:0006437">
    <property type="term" value="P:tyrosyl-tRNA aminoacylation"/>
    <property type="evidence" value="ECO:0007669"/>
    <property type="project" value="UniProtKB-UniRule"/>
</dbReference>
<dbReference type="CDD" id="cd00165">
    <property type="entry name" value="S4"/>
    <property type="match status" value="1"/>
</dbReference>
<dbReference type="CDD" id="cd00805">
    <property type="entry name" value="TyrRS_core"/>
    <property type="match status" value="1"/>
</dbReference>
<dbReference type="Gene3D" id="3.40.50.620">
    <property type="entry name" value="HUPs"/>
    <property type="match status" value="1"/>
</dbReference>
<dbReference type="Gene3D" id="3.10.290.10">
    <property type="entry name" value="RNA-binding S4 domain"/>
    <property type="match status" value="1"/>
</dbReference>
<dbReference type="Gene3D" id="1.10.240.10">
    <property type="entry name" value="Tyrosyl-Transfer RNA Synthetase"/>
    <property type="match status" value="1"/>
</dbReference>
<dbReference type="HAMAP" id="MF_02007">
    <property type="entry name" value="Tyr_tRNA_synth_type2"/>
    <property type="match status" value="1"/>
</dbReference>
<dbReference type="InterPro" id="IPR002305">
    <property type="entry name" value="aa-tRNA-synth_Ic"/>
</dbReference>
<dbReference type="InterPro" id="IPR014729">
    <property type="entry name" value="Rossmann-like_a/b/a_fold"/>
</dbReference>
<dbReference type="InterPro" id="IPR002942">
    <property type="entry name" value="S4_RNA-bd"/>
</dbReference>
<dbReference type="InterPro" id="IPR036986">
    <property type="entry name" value="S4_RNA-bd_sf"/>
</dbReference>
<dbReference type="InterPro" id="IPR002307">
    <property type="entry name" value="Tyr-tRNA-ligase"/>
</dbReference>
<dbReference type="InterPro" id="IPR024088">
    <property type="entry name" value="Tyr-tRNA-ligase_bac-type"/>
</dbReference>
<dbReference type="InterPro" id="IPR024108">
    <property type="entry name" value="Tyr-tRNA-ligase_bac_2"/>
</dbReference>
<dbReference type="NCBIfam" id="TIGR00234">
    <property type="entry name" value="tyrS"/>
    <property type="match status" value="1"/>
</dbReference>
<dbReference type="PANTHER" id="PTHR11766:SF1">
    <property type="entry name" value="TYROSINE--TRNA LIGASE"/>
    <property type="match status" value="1"/>
</dbReference>
<dbReference type="PANTHER" id="PTHR11766">
    <property type="entry name" value="TYROSYL-TRNA SYNTHETASE"/>
    <property type="match status" value="1"/>
</dbReference>
<dbReference type="Pfam" id="PF01479">
    <property type="entry name" value="S4"/>
    <property type="match status" value="1"/>
</dbReference>
<dbReference type="Pfam" id="PF00579">
    <property type="entry name" value="tRNA-synt_1b"/>
    <property type="match status" value="1"/>
</dbReference>
<dbReference type="PRINTS" id="PR01040">
    <property type="entry name" value="TRNASYNTHTYR"/>
</dbReference>
<dbReference type="SUPFAM" id="SSF55174">
    <property type="entry name" value="Alpha-L RNA-binding motif"/>
    <property type="match status" value="1"/>
</dbReference>
<dbReference type="SUPFAM" id="SSF52374">
    <property type="entry name" value="Nucleotidylyl transferase"/>
    <property type="match status" value="1"/>
</dbReference>
<dbReference type="PROSITE" id="PS50889">
    <property type="entry name" value="S4"/>
    <property type="match status" value="1"/>
</dbReference>
<gene>
    <name evidence="1" type="primary">tyrS</name>
    <name type="ordered locus">PMN2A_0900</name>
</gene>
<name>SYY_PROMT</name>
<sequence length="415" mass="46224">MLDHINELPDWISRGLDDLFPNDNSGDSDQSFLKRLELSSVDKKPLRVKLGIDPTGTDIHIGHSILFRKLRAFQDAGHTAILIIGDFTARIGDPTGKSKTRIQLSKDEVQSNALNYLEQLGLGKDPKDSLLDFSIPSRIEIRRNSEWLENLNLSKVIELLSNSTVGQMLAKEDFSNRYKSGTPISLHEFLYPLLQGYDSVAINSDVELGGTDQKFNIAMGRDLQKAFGQKPQFGMLLPILVGLDGARKMSKSLDNIVGINEDSLSMYSKLEKVPDDLVLTYLNLLTNENLKELSSNPREVQKFMALKVTSNFKGIEAAKNAQFNSEKLVLGTKDSLEEIPEASVSNVNFPAKAFYLFSKMEMCSSSSEARRQILGGGVRIDGKKIMDPNLEFHTPDDLIGKILQVGKKKFLRVST</sequence>